<evidence type="ECO:0000255" key="1">
    <source>
        <dbReference type="HAMAP-Rule" id="MF_00374"/>
    </source>
</evidence>
<evidence type="ECO:0000305" key="2"/>
<proteinExistence type="inferred from homology"/>
<name>RL29_MYCGI</name>
<accession>A4TEB6</accession>
<organism>
    <name type="scientific">Mycolicibacterium gilvum (strain PYR-GCK)</name>
    <name type="common">Mycobacterium gilvum (strain PYR-GCK)</name>
    <dbReference type="NCBI Taxonomy" id="350054"/>
    <lineage>
        <taxon>Bacteria</taxon>
        <taxon>Bacillati</taxon>
        <taxon>Actinomycetota</taxon>
        <taxon>Actinomycetes</taxon>
        <taxon>Mycobacteriales</taxon>
        <taxon>Mycobacteriaceae</taxon>
        <taxon>Mycolicibacterium</taxon>
    </lineage>
</organism>
<keyword id="KW-0687">Ribonucleoprotein</keyword>
<keyword id="KW-0689">Ribosomal protein</keyword>
<comment type="similarity">
    <text evidence="1">Belongs to the universal ribosomal protein uL29 family.</text>
</comment>
<protein>
    <recommendedName>
        <fullName evidence="1">Large ribosomal subunit protein uL29</fullName>
    </recommendedName>
    <alternativeName>
        <fullName evidence="2">50S ribosomal protein L29</fullName>
    </alternativeName>
</protein>
<sequence>MAVGTTTGELRELSDDELTDKLRESKEELFNLRFQMATGQLANNRRLRVVRQEIARVYTVLRERELGLAAGPGGEDS</sequence>
<reference key="1">
    <citation type="submission" date="2007-04" db="EMBL/GenBank/DDBJ databases">
        <title>Complete sequence of chromosome of Mycobacterium gilvum PYR-GCK.</title>
        <authorList>
            <consortium name="US DOE Joint Genome Institute"/>
            <person name="Copeland A."/>
            <person name="Lucas S."/>
            <person name="Lapidus A."/>
            <person name="Barry K."/>
            <person name="Detter J.C."/>
            <person name="Glavina del Rio T."/>
            <person name="Hammon N."/>
            <person name="Israni S."/>
            <person name="Dalin E."/>
            <person name="Tice H."/>
            <person name="Pitluck S."/>
            <person name="Chain P."/>
            <person name="Malfatti S."/>
            <person name="Shin M."/>
            <person name="Vergez L."/>
            <person name="Schmutz J."/>
            <person name="Larimer F."/>
            <person name="Land M."/>
            <person name="Hauser L."/>
            <person name="Kyrpides N."/>
            <person name="Mikhailova N."/>
            <person name="Miller C."/>
            <person name="Richardson P."/>
        </authorList>
    </citation>
    <scope>NUCLEOTIDE SEQUENCE [LARGE SCALE GENOMIC DNA]</scope>
    <source>
        <strain>PYR-GCK</strain>
    </source>
</reference>
<gene>
    <name evidence="1" type="primary">rpmC</name>
    <name type="ordered locus">Mflv_5041</name>
</gene>
<feature type="chain" id="PRO_1000079892" description="Large ribosomal subunit protein uL29">
    <location>
        <begin position="1"/>
        <end position="77"/>
    </location>
</feature>
<dbReference type="EMBL" id="CP000656">
    <property type="protein sequence ID" value="ABP47507.1"/>
    <property type="molecule type" value="Genomic_DNA"/>
</dbReference>
<dbReference type="SMR" id="A4TEB6"/>
<dbReference type="STRING" id="350054.Mflv_5041"/>
<dbReference type="KEGG" id="mgi:Mflv_5041"/>
<dbReference type="eggNOG" id="COG0255">
    <property type="taxonomic scope" value="Bacteria"/>
</dbReference>
<dbReference type="HOGENOM" id="CLU_158491_3_3_11"/>
<dbReference type="OrthoDB" id="9815192at2"/>
<dbReference type="GO" id="GO:0022625">
    <property type="term" value="C:cytosolic large ribosomal subunit"/>
    <property type="evidence" value="ECO:0007669"/>
    <property type="project" value="TreeGrafter"/>
</dbReference>
<dbReference type="GO" id="GO:0003735">
    <property type="term" value="F:structural constituent of ribosome"/>
    <property type="evidence" value="ECO:0007669"/>
    <property type="project" value="InterPro"/>
</dbReference>
<dbReference type="GO" id="GO:0006412">
    <property type="term" value="P:translation"/>
    <property type="evidence" value="ECO:0007669"/>
    <property type="project" value="UniProtKB-UniRule"/>
</dbReference>
<dbReference type="CDD" id="cd00427">
    <property type="entry name" value="Ribosomal_L29_HIP"/>
    <property type="match status" value="1"/>
</dbReference>
<dbReference type="FunFam" id="1.10.287.310:FF:000001">
    <property type="entry name" value="50S ribosomal protein L29"/>
    <property type="match status" value="1"/>
</dbReference>
<dbReference type="Gene3D" id="1.10.287.310">
    <property type="match status" value="1"/>
</dbReference>
<dbReference type="HAMAP" id="MF_00374">
    <property type="entry name" value="Ribosomal_uL29"/>
    <property type="match status" value="1"/>
</dbReference>
<dbReference type="InterPro" id="IPR050063">
    <property type="entry name" value="Ribosomal_protein_uL29"/>
</dbReference>
<dbReference type="InterPro" id="IPR001854">
    <property type="entry name" value="Ribosomal_uL29"/>
</dbReference>
<dbReference type="InterPro" id="IPR018254">
    <property type="entry name" value="Ribosomal_uL29_CS"/>
</dbReference>
<dbReference type="InterPro" id="IPR036049">
    <property type="entry name" value="Ribosomal_uL29_sf"/>
</dbReference>
<dbReference type="NCBIfam" id="TIGR00012">
    <property type="entry name" value="L29"/>
    <property type="match status" value="1"/>
</dbReference>
<dbReference type="PANTHER" id="PTHR10916">
    <property type="entry name" value="60S RIBOSOMAL PROTEIN L35/50S RIBOSOMAL PROTEIN L29"/>
    <property type="match status" value="1"/>
</dbReference>
<dbReference type="PANTHER" id="PTHR10916:SF0">
    <property type="entry name" value="LARGE RIBOSOMAL SUBUNIT PROTEIN UL29C"/>
    <property type="match status" value="1"/>
</dbReference>
<dbReference type="Pfam" id="PF00831">
    <property type="entry name" value="Ribosomal_L29"/>
    <property type="match status" value="1"/>
</dbReference>
<dbReference type="SUPFAM" id="SSF46561">
    <property type="entry name" value="Ribosomal protein L29 (L29p)"/>
    <property type="match status" value="1"/>
</dbReference>
<dbReference type="PROSITE" id="PS00579">
    <property type="entry name" value="RIBOSOMAL_L29"/>
    <property type="match status" value="1"/>
</dbReference>